<sequence>MNANELFEKIRVKQVIGTLDINVTDITTDSRTASEGSIFVASKGYTVDSHKFCQNVVDQGAKVIVVNHQQDINGDVTQVIVPDTLRVASLLAHTLYDFPSHQLTTIGVTGTNGKTSIATMIHLIYRGLGKGSAYLGTNGFQINEHKTRGANTTPETVSLTKKIKQAVDENAEAMTMEVSSHGLSLGRLRGVEFDVAIFSNLTQDHLDFHGTMEAYGHAKSLLFSQLGEDLSKEKYAVLNNDDDFSKYLASVTPYEIFTYGIDHDAQFMAKNIQESLQGVHFDFDTPIGTYSVKTPYVGKFNISNIMAAMIAVWSKGTSMEDIVRVVENLEPVEGRLEVLDPSLPIDLIIDYAHTADGMNKLIDAVKPFVKQKLIFLIGMAGERDLTKTPEMGAVACRADYVIFTPDNPANDDPKMLTAELAKGATHNHYVEFDDRAEGIKHAIDIAEPGDTVVLASKGREPYQIMPGHIKVPHRDDLIGLEAAYKKFGGGPSEH</sequence>
<organism>
    <name type="scientific">Staphylococcus haemolyticus (strain JCSC1435)</name>
    <dbReference type="NCBI Taxonomy" id="279808"/>
    <lineage>
        <taxon>Bacteria</taxon>
        <taxon>Bacillati</taxon>
        <taxon>Bacillota</taxon>
        <taxon>Bacilli</taxon>
        <taxon>Bacillales</taxon>
        <taxon>Staphylococcaceae</taxon>
        <taxon>Staphylococcus</taxon>
    </lineage>
</organism>
<name>MURE_STAHJ</name>
<protein>
    <recommendedName>
        <fullName evidence="1">UDP-N-acetylmuramoyl-L-alanyl-D-glutamate--L-lysine ligase</fullName>
        <ecNumber evidence="1">6.3.2.7</ecNumber>
    </recommendedName>
    <alternativeName>
        <fullName evidence="1">L-lysine-adding enzyme</fullName>
    </alternativeName>
    <alternativeName>
        <fullName evidence="1">UDP-MurNAc-L-Ala-D-Glu:L-Lys ligase</fullName>
    </alternativeName>
    <alternativeName>
        <fullName evidence="1">UDP-MurNAc-tripeptide synthetase</fullName>
    </alternativeName>
    <alternativeName>
        <fullName evidence="1">UDP-N-acetylmuramyl-tripeptide synthetase</fullName>
    </alternativeName>
</protein>
<keyword id="KW-0067">ATP-binding</keyword>
<keyword id="KW-0131">Cell cycle</keyword>
<keyword id="KW-0132">Cell division</keyword>
<keyword id="KW-0133">Cell shape</keyword>
<keyword id="KW-0961">Cell wall biogenesis/degradation</keyword>
<keyword id="KW-0963">Cytoplasm</keyword>
<keyword id="KW-0436">Ligase</keyword>
<keyword id="KW-0547">Nucleotide-binding</keyword>
<keyword id="KW-0573">Peptidoglycan synthesis</keyword>
<feature type="chain" id="PRO_1000012384" description="UDP-N-acetylmuramoyl-L-alanyl-D-glutamate--L-lysine ligase">
    <location>
        <begin position="1"/>
        <end position="494"/>
    </location>
</feature>
<feature type="short sequence motif" description="L-lysine recognition motif">
    <location>
        <begin position="406"/>
        <end position="409"/>
    </location>
</feature>
<feature type="binding site" evidence="1">
    <location>
        <position position="30"/>
    </location>
    <ligand>
        <name>UDP-N-acetyl-alpha-D-muramoyl-L-alanyl-D-glutamate</name>
        <dbReference type="ChEBI" id="CHEBI:83900"/>
    </ligand>
</feature>
<feature type="binding site" evidence="1">
    <location>
        <begin position="110"/>
        <end position="116"/>
    </location>
    <ligand>
        <name>ATP</name>
        <dbReference type="ChEBI" id="CHEBI:30616"/>
    </ligand>
</feature>
<feature type="binding site" evidence="1">
    <location>
        <begin position="152"/>
        <end position="153"/>
    </location>
    <ligand>
        <name>UDP-N-acetyl-alpha-D-muramoyl-L-alanyl-D-glutamate</name>
        <dbReference type="ChEBI" id="CHEBI:83900"/>
    </ligand>
</feature>
<feature type="binding site" evidence="1">
    <location>
        <position position="179"/>
    </location>
    <ligand>
        <name>UDP-N-acetyl-alpha-D-muramoyl-L-alanyl-D-glutamate</name>
        <dbReference type="ChEBI" id="CHEBI:83900"/>
    </ligand>
</feature>
<feature type="binding site" evidence="1">
    <location>
        <position position="187"/>
    </location>
    <ligand>
        <name>UDP-N-acetyl-alpha-D-muramoyl-L-alanyl-D-glutamate</name>
        <dbReference type="ChEBI" id="CHEBI:83900"/>
    </ligand>
</feature>
<feature type="modified residue" description="N6-carboxylysine" evidence="1">
    <location>
        <position position="219"/>
    </location>
</feature>
<gene>
    <name evidence="1" type="primary">murE</name>
    <name type="ordered locus">SH1941</name>
</gene>
<accession>Q4L525</accession>
<proteinExistence type="inferred from homology"/>
<comment type="function">
    <text evidence="1">Catalyzes the addition of L-lysine to the nucleotide precursor UDP-N-acetylmuramoyl-L-alanyl-D-glutamate (UMAG) in the biosynthesis of bacterial cell-wall peptidoglycan.</text>
</comment>
<comment type="catalytic activity">
    <reaction evidence="1">
        <text>UDP-N-acetyl-alpha-D-muramoyl-L-alanyl-D-glutamate + L-lysine + ATP = UDP-N-acetyl-alpha-D-muramoyl-L-alanyl-gamma-D-glutamyl-L-lysine + ADP + phosphate + H(+)</text>
        <dbReference type="Rhea" id="RHEA:17969"/>
        <dbReference type="ChEBI" id="CHEBI:15378"/>
        <dbReference type="ChEBI" id="CHEBI:30616"/>
        <dbReference type="ChEBI" id="CHEBI:32551"/>
        <dbReference type="ChEBI" id="CHEBI:43474"/>
        <dbReference type="ChEBI" id="CHEBI:83900"/>
        <dbReference type="ChEBI" id="CHEBI:83903"/>
        <dbReference type="ChEBI" id="CHEBI:456216"/>
        <dbReference type="EC" id="6.3.2.7"/>
    </reaction>
</comment>
<comment type="pathway">
    <text evidence="1">Cell wall biogenesis; peptidoglycan biosynthesis.</text>
</comment>
<comment type="subcellular location">
    <subcellularLocation>
        <location evidence="1">Cytoplasm</location>
    </subcellularLocation>
</comment>
<comment type="PTM">
    <text evidence="1">Carboxylation is probably crucial for Mg(2+) binding and, consequently, for the gamma-phosphate positioning of ATP.</text>
</comment>
<comment type="similarity">
    <text evidence="1">Belongs to the MurCDEF family. MurE subfamily.</text>
</comment>
<reference key="1">
    <citation type="journal article" date="2005" name="J. Bacteriol.">
        <title>Whole-genome sequencing of Staphylococcus haemolyticus uncovers the extreme plasticity of its genome and the evolution of human-colonizing staphylococcal species.</title>
        <authorList>
            <person name="Takeuchi F."/>
            <person name="Watanabe S."/>
            <person name="Baba T."/>
            <person name="Yuzawa H."/>
            <person name="Ito T."/>
            <person name="Morimoto Y."/>
            <person name="Kuroda M."/>
            <person name="Cui L."/>
            <person name="Takahashi M."/>
            <person name="Ankai A."/>
            <person name="Baba S."/>
            <person name="Fukui S."/>
            <person name="Lee J.C."/>
            <person name="Hiramatsu K."/>
        </authorList>
    </citation>
    <scope>NUCLEOTIDE SEQUENCE [LARGE SCALE GENOMIC DNA]</scope>
    <source>
        <strain>JCSC1435</strain>
    </source>
</reference>
<evidence type="ECO:0000255" key="1">
    <source>
        <dbReference type="HAMAP-Rule" id="MF_00208"/>
    </source>
</evidence>
<dbReference type="EC" id="6.3.2.7" evidence="1"/>
<dbReference type="EMBL" id="AP006716">
    <property type="protein sequence ID" value="BAE05250.1"/>
    <property type="molecule type" value="Genomic_DNA"/>
</dbReference>
<dbReference type="RefSeq" id="WP_011276211.1">
    <property type="nucleotide sequence ID" value="NC_007168.1"/>
</dbReference>
<dbReference type="SMR" id="Q4L525"/>
<dbReference type="KEGG" id="sha:SH1941"/>
<dbReference type="eggNOG" id="COG0769">
    <property type="taxonomic scope" value="Bacteria"/>
</dbReference>
<dbReference type="HOGENOM" id="CLU_022291_0_1_9"/>
<dbReference type="OrthoDB" id="9800958at2"/>
<dbReference type="UniPathway" id="UPA00219"/>
<dbReference type="Proteomes" id="UP000000543">
    <property type="component" value="Chromosome"/>
</dbReference>
<dbReference type="GO" id="GO:0005737">
    <property type="term" value="C:cytoplasm"/>
    <property type="evidence" value="ECO:0007669"/>
    <property type="project" value="UniProtKB-SubCell"/>
</dbReference>
<dbReference type="GO" id="GO:0005524">
    <property type="term" value="F:ATP binding"/>
    <property type="evidence" value="ECO:0007669"/>
    <property type="project" value="UniProtKB-UniRule"/>
</dbReference>
<dbReference type="GO" id="GO:0000287">
    <property type="term" value="F:magnesium ion binding"/>
    <property type="evidence" value="ECO:0007669"/>
    <property type="project" value="UniProtKB-UniRule"/>
</dbReference>
<dbReference type="GO" id="GO:0047482">
    <property type="term" value="F:UDP-N-acetylmuramoyl-L-alanyl-D-glutamate-L-lysine ligase activity"/>
    <property type="evidence" value="ECO:0007669"/>
    <property type="project" value="UniProtKB-UniRule"/>
</dbReference>
<dbReference type="GO" id="GO:0051301">
    <property type="term" value="P:cell division"/>
    <property type="evidence" value="ECO:0007669"/>
    <property type="project" value="UniProtKB-KW"/>
</dbReference>
<dbReference type="GO" id="GO:0071555">
    <property type="term" value="P:cell wall organization"/>
    <property type="evidence" value="ECO:0007669"/>
    <property type="project" value="UniProtKB-KW"/>
</dbReference>
<dbReference type="GO" id="GO:0009252">
    <property type="term" value="P:peptidoglycan biosynthetic process"/>
    <property type="evidence" value="ECO:0007669"/>
    <property type="project" value="UniProtKB-UniRule"/>
</dbReference>
<dbReference type="GO" id="GO:0008360">
    <property type="term" value="P:regulation of cell shape"/>
    <property type="evidence" value="ECO:0007669"/>
    <property type="project" value="UniProtKB-KW"/>
</dbReference>
<dbReference type="Gene3D" id="3.90.190.20">
    <property type="entry name" value="Mur ligase, C-terminal domain"/>
    <property type="match status" value="1"/>
</dbReference>
<dbReference type="Gene3D" id="3.40.1190.10">
    <property type="entry name" value="Mur-like, catalytic domain"/>
    <property type="match status" value="1"/>
</dbReference>
<dbReference type="Gene3D" id="3.40.1390.10">
    <property type="entry name" value="MurE/MurF, N-terminal domain"/>
    <property type="match status" value="1"/>
</dbReference>
<dbReference type="HAMAP" id="MF_00208">
    <property type="entry name" value="MurE"/>
    <property type="match status" value="1"/>
</dbReference>
<dbReference type="InterPro" id="IPR036565">
    <property type="entry name" value="Mur-like_cat_sf"/>
</dbReference>
<dbReference type="InterPro" id="IPR004101">
    <property type="entry name" value="Mur_ligase_C"/>
</dbReference>
<dbReference type="InterPro" id="IPR036615">
    <property type="entry name" value="Mur_ligase_C_dom_sf"/>
</dbReference>
<dbReference type="InterPro" id="IPR013221">
    <property type="entry name" value="Mur_ligase_cen"/>
</dbReference>
<dbReference type="InterPro" id="IPR000713">
    <property type="entry name" value="Mur_ligase_N"/>
</dbReference>
<dbReference type="InterPro" id="IPR035911">
    <property type="entry name" value="MurE/MurF_N"/>
</dbReference>
<dbReference type="InterPro" id="IPR005761">
    <property type="entry name" value="UDP-N-AcMur-Glu-dNH2Pim_ligase"/>
</dbReference>
<dbReference type="NCBIfam" id="TIGR01085">
    <property type="entry name" value="murE"/>
    <property type="match status" value="1"/>
</dbReference>
<dbReference type="NCBIfam" id="NF001126">
    <property type="entry name" value="PRK00139.1-4"/>
    <property type="match status" value="1"/>
</dbReference>
<dbReference type="NCBIfam" id="NF010628">
    <property type="entry name" value="PRK14022.1"/>
    <property type="match status" value="1"/>
</dbReference>
<dbReference type="PANTHER" id="PTHR23135">
    <property type="entry name" value="MUR LIGASE FAMILY MEMBER"/>
    <property type="match status" value="1"/>
</dbReference>
<dbReference type="PANTHER" id="PTHR23135:SF4">
    <property type="entry name" value="UDP-N-ACETYLMURAMOYL-L-ALANYL-D-GLUTAMATE--2,6-DIAMINOPIMELATE LIGASE MURE HOMOLOG, CHLOROPLASTIC"/>
    <property type="match status" value="1"/>
</dbReference>
<dbReference type="Pfam" id="PF01225">
    <property type="entry name" value="Mur_ligase"/>
    <property type="match status" value="1"/>
</dbReference>
<dbReference type="Pfam" id="PF02875">
    <property type="entry name" value="Mur_ligase_C"/>
    <property type="match status" value="1"/>
</dbReference>
<dbReference type="Pfam" id="PF08245">
    <property type="entry name" value="Mur_ligase_M"/>
    <property type="match status" value="1"/>
</dbReference>
<dbReference type="SUPFAM" id="SSF53623">
    <property type="entry name" value="MurD-like peptide ligases, catalytic domain"/>
    <property type="match status" value="1"/>
</dbReference>
<dbReference type="SUPFAM" id="SSF53244">
    <property type="entry name" value="MurD-like peptide ligases, peptide-binding domain"/>
    <property type="match status" value="1"/>
</dbReference>
<dbReference type="SUPFAM" id="SSF63418">
    <property type="entry name" value="MurE/MurF N-terminal domain"/>
    <property type="match status" value="1"/>
</dbReference>